<proteinExistence type="evidence at protein level"/>
<protein>
    <recommendedName>
        <fullName evidence="3">Metal ABC transporter substrate-binding lipoprotein FimA</fullName>
    </recommendedName>
    <alternativeName>
        <fullName>Adhesin B</fullName>
    </alternativeName>
    <alternativeName>
        <fullName>FimA</fullName>
    </alternativeName>
    <alternativeName>
        <fullName>Saliva-binding protein</fullName>
    </alternativeName>
</protein>
<reference key="1">
    <citation type="journal article" date="1989" name="Infect. Immun.">
        <title>Nucleotide sequence analysis of a type 1 fimbrial gene of Streptococcus sanguis FW213.</title>
        <authorList>
            <person name="Fenno J.C."/>
            <person name="Leblanc D.J."/>
            <person name="Fives-Taylor P.M."/>
        </authorList>
    </citation>
    <scope>NUCLEOTIDE SEQUENCE [GENOMIC DNA]</scope>
    <source>
        <strain>FW213</strain>
    </source>
</reference>
<reference key="2">
    <citation type="journal article" date="1991" name="Infect. Immun.">
        <title>Nucleotide sequence of a gene coding for a saliva-binding protein (SsaB) from Streptococcus sanguis 12 and possible role of the protein in coaggregation with actinomyces.</title>
        <authorList>
            <person name="Ganeshkumar N."/>
            <person name="Hannam P.M."/>
            <person name="Kolenbrander P.E."/>
            <person name="McBride B.C."/>
        </authorList>
    </citation>
    <scope>POSSIBLE FUNCTION</scope>
</reference>
<reference key="3">
    <citation type="journal article" date="1995" name="Mol. Microbiol.">
        <title>The fimA locus of Streptococcus parasanguis encodes an ATP-binding membrane transport system.</title>
        <authorList>
            <person name="Fenno J.C."/>
            <person name="Shaikh A."/>
            <person name="Spatafora G."/>
            <person name="Fives-Taylor P."/>
        </authorList>
    </citation>
    <scope>CHARACTERIZATION</scope>
    <source>
        <strain>FW213</strain>
    </source>
</reference>
<reference key="4">
    <citation type="journal article" date="2011" name="J. Biol. Chem.">
        <title>A molecular chaperone mediates a two-protein enzyme complex and glycosylation of serine-rich streptococcal adhesins.</title>
        <authorList>
            <person name="Wu R."/>
            <person name="Wu H."/>
        </authorList>
    </citation>
    <scope>SUBCELLULAR LOCATION</scope>
    <source>
        <strain>FW213</strain>
    </source>
</reference>
<name>MTSA_STRPA</name>
<gene>
    <name type="primary">fimA</name>
</gene>
<accession>P31305</accession>
<sequence length="309" mass="34349">MKKIASVLALFVALLFGLLACSKGSSSGASGKLKVVTTNSILADITKNIAGDKIELHSIVPVGKDPHEYEPLPEDVKKTSQADLIFYNGINLETGGNAWFTKLVKNANKVENKDYFAVSEGVDVIYLEGQNQAGKEDPHAWLNLENGILYAKNIAKQLIAKDPKNKDFYEKNLAAYTEKLSKLDQKAKQAFKNIPEDKKMIVTSEGCFKYFSKAYGVPSAYIWEINTEEEGTPEQIKTLVEKLRQTKVPALFVESSVDERPMKTVAKDTNIPIYAKIFTDSIAKEGEKGDSYYSMMKWNLDKIAEGLSQ</sequence>
<organism>
    <name type="scientific">Streptococcus parasanguinis</name>
    <dbReference type="NCBI Taxonomy" id="1318"/>
    <lineage>
        <taxon>Bacteria</taxon>
        <taxon>Bacillati</taxon>
        <taxon>Bacillota</taxon>
        <taxon>Bacilli</taxon>
        <taxon>Lactobacillales</taxon>
        <taxon>Streptococcaceae</taxon>
        <taxon>Streptococcus</taxon>
    </lineage>
</organism>
<evidence type="ECO:0000250" key="1">
    <source>
        <dbReference type="UniProtKB" id="P0A4G2"/>
    </source>
</evidence>
<evidence type="ECO:0000255" key="2">
    <source>
        <dbReference type="PROSITE-ProRule" id="PRU00303"/>
    </source>
</evidence>
<evidence type="ECO:0000305" key="3"/>
<evidence type="ECO:0000305" key="4">
    <source>
    </source>
</evidence>
<evidence type="ECO:0000305" key="5">
    <source>
    </source>
</evidence>
<evidence type="ECO:0000305" key="6">
    <source>
    </source>
</evidence>
<comment type="function">
    <text evidence="1 4">Part of an ATP-binding cassette (ABC) transport system involved in metal import (By similarity). Binds a metal with high affinity and specificity and delivers it to the membrane permease for translocation into the cytoplasm (By similarity). Also acts as an adhesin which is involved on adherence to extracellular matrix (By similarity). It is an important factor in pathogenesis and infection (By similarity). May contribute to the formation and accumulation of dental plaque (Probable).</text>
</comment>
<comment type="subcellular location">
    <subcellularLocation>
        <location evidence="2 5">Cell membrane</location>
        <topology evidence="2 5">Lipid-anchor</topology>
    </subcellularLocation>
</comment>
<comment type="similarity">
    <text evidence="3">Belongs to the bacterial solute-binding protein 9 family. Lipoprotein receptor antigen (Lrai) subfamily.</text>
</comment>
<comment type="caution">
    <text evidence="6">Was originally thought to be a fimbrial subunit.</text>
</comment>
<feature type="signal peptide" evidence="2">
    <location>
        <begin position="1"/>
        <end position="20"/>
    </location>
</feature>
<feature type="chain" id="PRO_0000031890" description="Metal ABC transporter substrate-binding lipoprotein FimA">
    <location>
        <begin position="21"/>
        <end position="309"/>
    </location>
</feature>
<feature type="binding site" evidence="1">
    <location>
        <position position="67"/>
    </location>
    <ligand>
        <name>a divalent metal cation</name>
        <dbReference type="ChEBI" id="CHEBI:60240"/>
    </ligand>
</feature>
<feature type="binding site" evidence="1">
    <location>
        <position position="139"/>
    </location>
    <ligand>
        <name>a divalent metal cation</name>
        <dbReference type="ChEBI" id="CHEBI:60240"/>
    </ligand>
</feature>
<feature type="binding site" evidence="1">
    <location>
        <position position="205"/>
    </location>
    <ligand>
        <name>a divalent metal cation</name>
        <dbReference type="ChEBI" id="CHEBI:60240"/>
    </ligand>
</feature>
<feature type="binding site" evidence="1">
    <location>
        <position position="280"/>
    </location>
    <ligand>
        <name>a divalent metal cation</name>
        <dbReference type="ChEBI" id="CHEBI:60240"/>
    </ligand>
</feature>
<feature type="lipid moiety-binding region" description="N-palmitoyl cysteine" evidence="2">
    <location>
        <position position="21"/>
    </location>
</feature>
<feature type="lipid moiety-binding region" description="S-diacylglycerol cysteine" evidence="2">
    <location>
        <position position="21"/>
    </location>
</feature>
<dbReference type="EMBL" id="M26130">
    <property type="protein sequence ID" value="AAA53077.1"/>
    <property type="molecule type" value="Genomic_DNA"/>
</dbReference>
<dbReference type="PIR" id="A37186">
    <property type="entry name" value="A37186"/>
</dbReference>
<dbReference type="RefSeq" id="WP_014712825.1">
    <property type="nucleotide sequence ID" value="NZ_LAWB01000013.1"/>
</dbReference>
<dbReference type="SMR" id="P31305"/>
<dbReference type="GO" id="GO:0005886">
    <property type="term" value="C:plasma membrane"/>
    <property type="evidence" value="ECO:0007669"/>
    <property type="project" value="UniProtKB-SubCell"/>
</dbReference>
<dbReference type="GO" id="GO:0046872">
    <property type="term" value="F:metal ion binding"/>
    <property type="evidence" value="ECO:0007669"/>
    <property type="project" value="UniProtKB-KW"/>
</dbReference>
<dbReference type="GO" id="GO:0007155">
    <property type="term" value="P:cell adhesion"/>
    <property type="evidence" value="ECO:0007669"/>
    <property type="project" value="InterPro"/>
</dbReference>
<dbReference type="GO" id="GO:0030001">
    <property type="term" value="P:metal ion transport"/>
    <property type="evidence" value="ECO:0007669"/>
    <property type="project" value="InterPro"/>
</dbReference>
<dbReference type="CDD" id="cd01137">
    <property type="entry name" value="PsaA"/>
    <property type="match status" value="1"/>
</dbReference>
<dbReference type="Gene3D" id="3.40.50.1980">
    <property type="entry name" value="Nitrogenase molybdenum iron protein domain"/>
    <property type="match status" value="2"/>
</dbReference>
<dbReference type="InterPro" id="IPR006129">
    <property type="entry name" value="AdhesinB"/>
</dbReference>
<dbReference type="InterPro" id="IPR050492">
    <property type="entry name" value="Bact_metal-bind_prot9"/>
</dbReference>
<dbReference type="InterPro" id="IPR006128">
    <property type="entry name" value="Lipoprotein_PsaA-like"/>
</dbReference>
<dbReference type="InterPro" id="IPR006127">
    <property type="entry name" value="ZnuA-like"/>
</dbReference>
<dbReference type="NCBIfam" id="NF040928">
    <property type="entry name" value="ABC_lipo_SloC"/>
    <property type="match status" value="1"/>
</dbReference>
<dbReference type="PANTHER" id="PTHR42953">
    <property type="entry name" value="HIGH-AFFINITY ZINC UPTAKE SYSTEM PROTEIN ZNUA-RELATED"/>
    <property type="match status" value="1"/>
</dbReference>
<dbReference type="PANTHER" id="PTHR42953:SF1">
    <property type="entry name" value="METAL-BINDING PROTEIN HI_0362-RELATED"/>
    <property type="match status" value="1"/>
</dbReference>
<dbReference type="Pfam" id="PF01297">
    <property type="entry name" value="ZnuA"/>
    <property type="match status" value="1"/>
</dbReference>
<dbReference type="PRINTS" id="PR00691">
    <property type="entry name" value="ADHESINB"/>
</dbReference>
<dbReference type="PRINTS" id="PR00690">
    <property type="entry name" value="ADHESNFAMILY"/>
</dbReference>
<dbReference type="SUPFAM" id="SSF53807">
    <property type="entry name" value="Helical backbone' metal receptor"/>
    <property type="match status" value="1"/>
</dbReference>
<dbReference type="PROSITE" id="PS51257">
    <property type="entry name" value="PROKAR_LIPOPROTEIN"/>
    <property type="match status" value="1"/>
</dbReference>
<keyword id="KW-1003">Cell membrane</keyword>
<keyword id="KW-0449">Lipoprotein</keyword>
<keyword id="KW-0464">Manganese</keyword>
<keyword id="KW-0472">Membrane</keyword>
<keyword id="KW-0479">Metal-binding</keyword>
<keyword id="KW-0564">Palmitate</keyword>
<keyword id="KW-0732">Signal</keyword>
<keyword id="KW-0813">Transport</keyword>